<sequence>MNRKQIAKGKLVRRFGINIFEQPKYDKILKKKPHPPGMHGKARKAKITEYGKQLIEKQKIKFTYGVSERQLPNTFKEAKKHHGVTGYNLLSILETIIDNIVYRAGFAFSRAHARLIVSHGIVILNGRRVTIPSIILRANDQILIQEIDSLKKLIGSNIEQTSAQRNLPTGIELNADYLNIKVKHAPSRDEIPTLANEQMVVEYYSKRA</sequence>
<proteinExistence type="inferred from homology"/>
<keyword id="KW-0687">Ribonucleoprotein</keyword>
<keyword id="KW-0689">Ribosomal protein</keyword>
<keyword id="KW-0694">RNA-binding</keyword>
<keyword id="KW-0699">rRNA-binding</keyword>
<gene>
    <name evidence="1" type="primary">rpsD</name>
    <name type="ordered locus">BAPKO_0652</name>
    <name type="ordered locus">BafPKo_0635</name>
</gene>
<comment type="function">
    <text evidence="1">One of the primary rRNA binding proteins, it binds directly to 16S rRNA where it nucleates assembly of the body of the 30S subunit.</text>
</comment>
<comment type="function">
    <text evidence="1">With S5 and S12 plays an important role in translational accuracy.</text>
</comment>
<comment type="subunit">
    <text evidence="1">Part of the 30S ribosomal subunit. Contacts protein S5. The interaction surface between S4 and S5 is involved in control of translational fidelity.</text>
</comment>
<comment type="similarity">
    <text evidence="1">Belongs to the universal ribosomal protein uS4 family.</text>
</comment>
<dbReference type="EMBL" id="CP000395">
    <property type="protein sequence ID" value="ABH01887.1"/>
    <property type="molecule type" value="Genomic_DNA"/>
</dbReference>
<dbReference type="EMBL" id="CP002933">
    <property type="protein sequence ID" value="AEL69835.1"/>
    <property type="molecule type" value="Genomic_DNA"/>
</dbReference>
<dbReference type="RefSeq" id="WP_011601126.1">
    <property type="nucleotide sequence ID" value="NC_008277.1"/>
</dbReference>
<dbReference type="SMR" id="Q0SMP1"/>
<dbReference type="STRING" id="29518.BLA32_01180"/>
<dbReference type="KEGG" id="baf:BAPKO_0652"/>
<dbReference type="KEGG" id="bafz:BafPKo_0635"/>
<dbReference type="PATRIC" id="fig|390236.22.peg.608"/>
<dbReference type="eggNOG" id="COG0522">
    <property type="taxonomic scope" value="Bacteria"/>
</dbReference>
<dbReference type="HOGENOM" id="CLU_092403_0_4_12"/>
<dbReference type="OrthoDB" id="9803672at2"/>
<dbReference type="Proteomes" id="UP000005216">
    <property type="component" value="Chromosome"/>
</dbReference>
<dbReference type="GO" id="GO:0015935">
    <property type="term" value="C:small ribosomal subunit"/>
    <property type="evidence" value="ECO:0007669"/>
    <property type="project" value="InterPro"/>
</dbReference>
<dbReference type="GO" id="GO:0019843">
    <property type="term" value="F:rRNA binding"/>
    <property type="evidence" value="ECO:0007669"/>
    <property type="project" value="UniProtKB-UniRule"/>
</dbReference>
<dbReference type="GO" id="GO:0003735">
    <property type="term" value="F:structural constituent of ribosome"/>
    <property type="evidence" value="ECO:0007669"/>
    <property type="project" value="InterPro"/>
</dbReference>
<dbReference type="GO" id="GO:0042274">
    <property type="term" value="P:ribosomal small subunit biogenesis"/>
    <property type="evidence" value="ECO:0007669"/>
    <property type="project" value="TreeGrafter"/>
</dbReference>
<dbReference type="GO" id="GO:0006412">
    <property type="term" value="P:translation"/>
    <property type="evidence" value="ECO:0007669"/>
    <property type="project" value="UniProtKB-UniRule"/>
</dbReference>
<dbReference type="CDD" id="cd00165">
    <property type="entry name" value="S4"/>
    <property type="match status" value="1"/>
</dbReference>
<dbReference type="FunFam" id="3.10.290.10:FF:000001">
    <property type="entry name" value="30S ribosomal protein S4"/>
    <property type="match status" value="1"/>
</dbReference>
<dbReference type="Gene3D" id="1.10.1050.10">
    <property type="entry name" value="Ribosomal Protein S4 Delta 41, Chain A, domain 1"/>
    <property type="match status" value="1"/>
</dbReference>
<dbReference type="Gene3D" id="3.10.290.10">
    <property type="entry name" value="RNA-binding S4 domain"/>
    <property type="match status" value="1"/>
</dbReference>
<dbReference type="HAMAP" id="MF_01306_B">
    <property type="entry name" value="Ribosomal_uS4_B"/>
    <property type="match status" value="1"/>
</dbReference>
<dbReference type="InterPro" id="IPR022801">
    <property type="entry name" value="Ribosomal_uS4"/>
</dbReference>
<dbReference type="InterPro" id="IPR005709">
    <property type="entry name" value="Ribosomal_uS4_bac-type"/>
</dbReference>
<dbReference type="InterPro" id="IPR001912">
    <property type="entry name" value="Ribosomal_uS4_N"/>
</dbReference>
<dbReference type="InterPro" id="IPR002942">
    <property type="entry name" value="S4_RNA-bd"/>
</dbReference>
<dbReference type="InterPro" id="IPR036986">
    <property type="entry name" value="S4_RNA-bd_sf"/>
</dbReference>
<dbReference type="NCBIfam" id="NF003717">
    <property type="entry name" value="PRK05327.1"/>
    <property type="match status" value="1"/>
</dbReference>
<dbReference type="NCBIfam" id="TIGR01017">
    <property type="entry name" value="rpsD_bact"/>
    <property type="match status" value="1"/>
</dbReference>
<dbReference type="PANTHER" id="PTHR11831">
    <property type="entry name" value="30S 40S RIBOSOMAL PROTEIN"/>
    <property type="match status" value="1"/>
</dbReference>
<dbReference type="PANTHER" id="PTHR11831:SF4">
    <property type="entry name" value="SMALL RIBOSOMAL SUBUNIT PROTEIN US4M"/>
    <property type="match status" value="1"/>
</dbReference>
<dbReference type="Pfam" id="PF00163">
    <property type="entry name" value="Ribosomal_S4"/>
    <property type="match status" value="1"/>
</dbReference>
<dbReference type="Pfam" id="PF01479">
    <property type="entry name" value="S4"/>
    <property type="match status" value="1"/>
</dbReference>
<dbReference type="SMART" id="SM01390">
    <property type="entry name" value="Ribosomal_S4"/>
    <property type="match status" value="1"/>
</dbReference>
<dbReference type="SMART" id="SM00363">
    <property type="entry name" value="S4"/>
    <property type="match status" value="1"/>
</dbReference>
<dbReference type="SUPFAM" id="SSF55174">
    <property type="entry name" value="Alpha-L RNA-binding motif"/>
    <property type="match status" value="1"/>
</dbReference>
<dbReference type="PROSITE" id="PS50889">
    <property type="entry name" value="S4"/>
    <property type="match status" value="1"/>
</dbReference>
<feature type="chain" id="PRO_0000293248" description="Small ribosomal subunit protein uS4">
    <location>
        <begin position="1"/>
        <end position="208"/>
    </location>
</feature>
<feature type="domain" description="S4 RNA-binding" evidence="1">
    <location>
        <begin position="95"/>
        <end position="159"/>
    </location>
</feature>
<feature type="sequence conflict" description="In Ref. 2; AEL69835." evidence="2" ref="2">
    <original>P</original>
    <variation>T</variation>
    <location>
        <position position="72"/>
    </location>
</feature>
<feature type="sequence conflict" description="In Ref. 2; AEL69835." evidence="2" ref="2">
    <original>Y</original>
    <variation>D</variation>
    <location>
        <position position="87"/>
    </location>
</feature>
<feature type="sequence conflict" description="In Ref. 2; AEL69835." evidence="2" ref="2">
    <original>TI</original>
    <variation>RR</variation>
    <location>
        <begin position="95"/>
        <end position="96"/>
    </location>
</feature>
<feature type="sequence conflict" description="In Ref. 2; AEL69835." evidence="2" ref="2">
    <original>F</original>
    <variation>I</variation>
    <location>
        <position position="108"/>
    </location>
</feature>
<feature type="sequence conflict" description="In Ref. 2; AEL69835." evidence="2" ref="2">
    <original>L</original>
    <variation>Q</variation>
    <location>
        <position position="115"/>
    </location>
</feature>
<feature type="sequence conflict" description="In Ref. 2; AEL69835." evidence="2" ref="2">
    <original>LIQEI</original>
    <variation>QIKEK</variation>
    <location>
        <begin position="143"/>
        <end position="147"/>
    </location>
</feature>
<feature type="sequence conflict" description="In Ref. 2; AEL69835." evidence="2" ref="2">
    <original>G</original>
    <variation>R</variation>
    <location>
        <position position="155"/>
    </location>
</feature>
<feature type="sequence conflict" description="In Ref. 2; AEL69835." evidence="2" ref="2">
    <original>Q</original>
    <variation>K</variation>
    <location>
        <position position="160"/>
    </location>
</feature>
<feature type="sequence conflict" description="In Ref. 2; AEL69835." evidence="2" ref="2">
    <original>AQ</original>
    <variation>SL</variation>
    <location>
        <begin position="163"/>
        <end position="164"/>
    </location>
</feature>
<feature type="sequence conflict" description="In Ref. 2; AEL69835." evidence="2" ref="2">
    <original>G</original>
    <variation>W</variation>
    <location>
        <position position="170"/>
    </location>
</feature>
<feature type="sequence conflict" description="In Ref. 2; AEL69835." evidence="2" ref="2">
    <original>L</original>
    <variation>V</variation>
    <location>
        <position position="173"/>
    </location>
</feature>
<feature type="sequence conflict" description="In Ref. 2; AEL69835." evidence="2" ref="2">
    <original>Y</original>
    <variation>D</variation>
    <location>
        <position position="177"/>
    </location>
</feature>
<protein>
    <recommendedName>
        <fullName evidence="1">Small ribosomal subunit protein uS4</fullName>
    </recommendedName>
    <alternativeName>
        <fullName evidence="2">30S ribosomal protein S4</fullName>
    </alternativeName>
</protein>
<accession>Q0SMP1</accession>
<accession>G0IQG5</accession>
<evidence type="ECO:0000255" key="1">
    <source>
        <dbReference type="HAMAP-Rule" id="MF_01306"/>
    </source>
</evidence>
<evidence type="ECO:0000305" key="2"/>
<name>RS4_BORAP</name>
<organism>
    <name type="scientific">Borreliella afzelii (strain PKo)</name>
    <name type="common">Borrelia afzelii</name>
    <dbReference type="NCBI Taxonomy" id="390236"/>
    <lineage>
        <taxon>Bacteria</taxon>
        <taxon>Pseudomonadati</taxon>
        <taxon>Spirochaetota</taxon>
        <taxon>Spirochaetia</taxon>
        <taxon>Spirochaetales</taxon>
        <taxon>Borreliaceae</taxon>
        <taxon>Borreliella</taxon>
    </lineage>
</organism>
<reference key="1">
    <citation type="journal article" date="2006" name="BMC Genomics">
        <title>Comparative genome analysis: selection pressure on the Borrelia vls cassettes is essential for infectivity.</title>
        <authorList>
            <person name="Gloeckner G."/>
            <person name="Schulte-Spechtel U."/>
            <person name="Schilhabel M."/>
            <person name="Felder M."/>
            <person name="Suehnel J."/>
            <person name="Wilske B."/>
            <person name="Platzer M."/>
        </authorList>
    </citation>
    <scope>NUCLEOTIDE SEQUENCE [LARGE SCALE GENOMIC DNA]</scope>
    <source>
        <strain>PKo</strain>
    </source>
</reference>
<reference key="2">
    <citation type="journal article" date="2011" name="J. Bacteriol.">
        <title>Whole-genome sequences of two Borrelia afzelii and two Borrelia garinii Lyme disease agent isolates.</title>
        <authorList>
            <person name="Casjens S.R."/>
            <person name="Mongodin E.F."/>
            <person name="Qiu W.G."/>
            <person name="Dunn J.J."/>
            <person name="Luft B.J."/>
            <person name="Fraser-Liggett C.M."/>
            <person name="Schutzer S.E."/>
        </authorList>
    </citation>
    <scope>NUCLEOTIDE SEQUENCE [LARGE SCALE GENOMIC DNA]</scope>
    <source>
        <strain>PKo</strain>
    </source>
</reference>